<feature type="chain" id="PRO_1000002995" description="Phospho-N-acetylmuramoyl-pentapeptide-transferase">
    <location>
        <begin position="1"/>
        <end position="321"/>
    </location>
</feature>
<feature type="transmembrane region" description="Helical" evidence="1">
    <location>
        <begin position="6"/>
        <end position="26"/>
    </location>
</feature>
<feature type="transmembrane region" description="Helical" evidence="1">
    <location>
        <begin position="53"/>
        <end position="73"/>
    </location>
</feature>
<feature type="transmembrane region" description="Helical" evidence="1">
    <location>
        <begin position="77"/>
        <end position="97"/>
    </location>
</feature>
<feature type="transmembrane region" description="Helical" evidence="1">
    <location>
        <begin position="121"/>
        <end position="141"/>
    </location>
</feature>
<feature type="transmembrane region" description="Helical" evidence="1">
    <location>
        <begin position="144"/>
        <end position="164"/>
    </location>
</feature>
<feature type="transmembrane region" description="Helical" evidence="1">
    <location>
        <begin position="175"/>
        <end position="195"/>
    </location>
</feature>
<feature type="transmembrane region" description="Helical" evidence="1">
    <location>
        <begin position="200"/>
        <end position="220"/>
    </location>
</feature>
<feature type="transmembrane region" description="Helical" evidence="1">
    <location>
        <begin position="226"/>
        <end position="246"/>
    </location>
</feature>
<feature type="transmembrane region" description="Helical" evidence="1">
    <location>
        <begin position="251"/>
        <end position="271"/>
    </location>
</feature>
<feature type="transmembrane region" description="Helical" evidence="1">
    <location>
        <begin position="301"/>
        <end position="321"/>
    </location>
</feature>
<organism>
    <name type="scientific">Lacticaseibacillus paracasei (strain ATCC 334 / BCRC 17002 / CCUG 31169 / CIP 107868 / KCTC 3260 / NRRL B-441)</name>
    <name type="common">Lactobacillus paracasei</name>
    <dbReference type="NCBI Taxonomy" id="321967"/>
    <lineage>
        <taxon>Bacteria</taxon>
        <taxon>Bacillati</taxon>
        <taxon>Bacillota</taxon>
        <taxon>Bacilli</taxon>
        <taxon>Lactobacillales</taxon>
        <taxon>Lactobacillaceae</taxon>
        <taxon>Lacticaseibacillus</taxon>
    </lineage>
</organism>
<gene>
    <name evidence="1" type="primary">mraY</name>
    <name type="ordered locus">LSEI_1270</name>
</gene>
<name>MRAY_LACP3</name>
<accession>Q039R9</accession>
<sequence>MQLAQMLIPMVSAFAITIMFMPLFIGYMRYKKEGQVIREEGPSWHEKKSGTPTMGGLIFIAAIIVSAIWVGIWQHQLTLSVWVSLFILVLYGLLGFYDDFEKLVHHRNEGLKAWQKLAGQILGAIIFLIAYFHEGFDHTLWVPIIGNVSAAWFYVLFVIVWLVGFSNAVNLTDGLDGLVAGQTTISFGTYAIIAAHDGRTDVLIVCLVTIGAMLGFLMFNHKPAQIFMGDLGSLALGGMLAVVAILLHREWSLLLIGIIYVTETASVILQVGSFKLTGKRIFLMSPIHHHFEMKGWSEWQIDLTFWLVGLIGSGIYLAFFL</sequence>
<protein>
    <recommendedName>
        <fullName evidence="1">Phospho-N-acetylmuramoyl-pentapeptide-transferase</fullName>
        <ecNumber evidence="1">2.7.8.13</ecNumber>
    </recommendedName>
    <alternativeName>
        <fullName evidence="1">UDP-MurNAc-pentapeptide phosphotransferase</fullName>
    </alternativeName>
</protein>
<dbReference type="EC" id="2.7.8.13" evidence="1"/>
<dbReference type="EMBL" id="CP000423">
    <property type="protein sequence ID" value="ABJ70053.1"/>
    <property type="molecule type" value="Genomic_DNA"/>
</dbReference>
<dbReference type="RefSeq" id="WP_003594376.1">
    <property type="nucleotide sequence ID" value="NC_008526.1"/>
</dbReference>
<dbReference type="RefSeq" id="YP_806495.1">
    <property type="nucleotide sequence ID" value="NC_008526.1"/>
</dbReference>
<dbReference type="SMR" id="Q039R9"/>
<dbReference type="STRING" id="321967.LSEI_1270"/>
<dbReference type="PaxDb" id="321967-LSEI_1270"/>
<dbReference type="KEGG" id="lca:LSEI_1270"/>
<dbReference type="PATRIC" id="fig|321967.11.peg.1246"/>
<dbReference type="HOGENOM" id="CLU_023982_0_1_9"/>
<dbReference type="UniPathway" id="UPA00219"/>
<dbReference type="Proteomes" id="UP000001651">
    <property type="component" value="Chromosome"/>
</dbReference>
<dbReference type="GO" id="GO:0005886">
    <property type="term" value="C:plasma membrane"/>
    <property type="evidence" value="ECO:0007669"/>
    <property type="project" value="UniProtKB-SubCell"/>
</dbReference>
<dbReference type="GO" id="GO:0046872">
    <property type="term" value="F:metal ion binding"/>
    <property type="evidence" value="ECO:0007669"/>
    <property type="project" value="UniProtKB-KW"/>
</dbReference>
<dbReference type="GO" id="GO:0008963">
    <property type="term" value="F:phospho-N-acetylmuramoyl-pentapeptide-transferase activity"/>
    <property type="evidence" value="ECO:0007669"/>
    <property type="project" value="UniProtKB-UniRule"/>
</dbReference>
<dbReference type="GO" id="GO:0051301">
    <property type="term" value="P:cell division"/>
    <property type="evidence" value="ECO:0007669"/>
    <property type="project" value="UniProtKB-KW"/>
</dbReference>
<dbReference type="GO" id="GO:0071555">
    <property type="term" value="P:cell wall organization"/>
    <property type="evidence" value="ECO:0007669"/>
    <property type="project" value="UniProtKB-KW"/>
</dbReference>
<dbReference type="GO" id="GO:0009252">
    <property type="term" value="P:peptidoglycan biosynthetic process"/>
    <property type="evidence" value="ECO:0007669"/>
    <property type="project" value="UniProtKB-UniRule"/>
</dbReference>
<dbReference type="GO" id="GO:0008360">
    <property type="term" value="P:regulation of cell shape"/>
    <property type="evidence" value="ECO:0007669"/>
    <property type="project" value="UniProtKB-KW"/>
</dbReference>
<dbReference type="CDD" id="cd06852">
    <property type="entry name" value="GT_MraY"/>
    <property type="match status" value="1"/>
</dbReference>
<dbReference type="HAMAP" id="MF_00038">
    <property type="entry name" value="MraY"/>
    <property type="match status" value="1"/>
</dbReference>
<dbReference type="InterPro" id="IPR000715">
    <property type="entry name" value="Glycosyl_transferase_4"/>
</dbReference>
<dbReference type="InterPro" id="IPR003524">
    <property type="entry name" value="PNAcMuramoyl-5peptid_Trfase"/>
</dbReference>
<dbReference type="InterPro" id="IPR018480">
    <property type="entry name" value="PNAcMuramoyl-5peptid_Trfase_CS"/>
</dbReference>
<dbReference type="NCBIfam" id="TIGR00445">
    <property type="entry name" value="mraY"/>
    <property type="match status" value="1"/>
</dbReference>
<dbReference type="PANTHER" id="PTHR22926">
    <property type="entry name" value="PHOSPHO-N-ACETYLMURAMOYL-PENTAPEPTIDE-TRANSFERASE"/>
    <property type="match status" value="1"/>
</dbReference>
<dbReference type="PANTHER" id="PTHR22926:SF5">
    <property type="entry name" value="PHOSPHO-N-ACETYLMURAMOYL-PENTAPEPTIDE-TRANSFERASE HOMOLOG"/>
    <property type="match status" value="1"/>
</dbReference>
<dbReference type="Pfam" id="PF00953">
    <property type="entry name" value="Glycos_transf_4"/>
    <property type="match status" value="1"/>
</dbReference>
<dbReference type="Pfam" id="PF10555">
    <property type="entry name" value="MraY_sig1"/>
    <property type="match status" value="1"/>
</dbReference>
<dbReference type="PROSITE" id="PS01347">
    <property type="entry name" value="MRAY_1"/>
    <property type="match status" value="1"/>
</dbReference>
<dbReference type="PROSITE" id="PS01348">
    <property type="entry name" value="MRAY_2"/>
    <property type="match status" value="1"/>
</dbReference>
<proteinExistence type="inferred from homology"/>
<reference key="1">
    <citation type="journal article" date="2006" name="Proc. Natl. Acad. Sci. U.S.A.">
        <title>Comparative genomics of the lactic acid bacteria.</title>
        <authorList>
            <person name="Makarova K.S."/>
            <person name="Slesarev A."/>
            <person name="Wolf Y.I."/>
            <person name="Sorokin A."/>
            <person name="Mirkin B."/>
            <person name="Koonin E.V."/>
            <person name="Pavlov A."/>
            <person name="Pavlova N."/>
            <person name="Karamychev V."/>
            <person name="Polouchine N."/>
            <person name="Shakhova V."/>
            <person name="Grigoriev I."/>
            <person name="Lou Y."/>
            <person name="Rohksar D."/>
            <person name="Lucas S."/>
            <person name="Huang K."/>
            <person name="Goodstein D.M."/>
            <person name="Hawkins T."/>
            <person name="Plengvidhya V."/>
            <person name="Welker D."/>
            <person name="Hughes J."/>
            <person name="Goh Y."/>
            <person name="Benson A."/>
            <person name="Baldwin K."/>
            <person name="Lee J.-H."/>
            <person name="Diaz-Muniz I."/>
            <person name="Dosti B."/>
            <person name="Smeianov V."/>
            <person name="Wechter W."/>
            <person name="Barabote R."/>
            <person name="Lorca G."/>
            <person name="Altermann E."/>
            <person name="Barrangou R."/>
            <person name="Ganesan B."/>
            <person name="Xie Y."/>
            <person name="Rawsthorne H."/>
            <person name="Tamir D."/>
            <person name="Parker C."/>
            <person name="Breidt F."/>
            <person name="Broadbent J.R."/>
            <person name="Hutkins R."/>
            <person name="O'Sullivan D."/>
            <person name="Steele J."/>
            <person name="Unlu G."/>
            <person name="Saier M.H. Jr."/>
            <person name="Klaenhammer T."/>
            <person name="Richardson P."/>
            <person name="Kozyavkin S."/>
            <person name="Weimer B.C."/>
            <person name="Mills D.A."/>
        </authorList>
    </citation>
    <scope>NUCLEOTIDE SEQUENCE [LARGE SCALE GENOMIC DNA]</scope>
    <source>
        <strain>ATCC 334 / BCRC 17002 / CCUG 31169 / CIP 107868 / KCTC 3260 / NRRL B-441</strain>
    </source>
</reference>
<evidence type="ECO:0000255" key="1">
    <source>
        <dbReference type="HAMAP-Rule" id="MF_00038"/>
    </source>
</evidence>
<comment type="function">
    <text evidence="1">Catalyzes the initial step of the lipid cycle reactions in the biosynthesis of the cell wall peptidoglycan: transfers peptidoglycan precursor phospho-MurNAc-pentapeptide from UDP-MurNAc-pentapeptide onto the lipid carrier undecaprenyl phosphate, yielding undecaprenyl-pyrophosphoryl-MurNAc-pentapeptide, known as lipid I.</text>
</comment>
<comment type="catalytic activity">
    <reaction evidence="1">
        <text>UDP-N-acetyl-alpha-D-muramoyl-L-alanyl-gamma-D-glutamyl-L-lysyl-D-alanyl-D-alanine + di-trans,octa-cis-undecaprenyl phosphate = Mur2Ac(oyl-L-Ala-gamma-D-Glu-L-Lys-D-Ala-D-Ala)-di-trans,octa-cis-undecaprenyl diphosphate + UMP</text>
        <dbReference type="Rhea" id="RHEA:21920"/>
        <dbReference type="ChEBI" id="CHEBI:57865"/>
        <dbReference type="ChEBI" id="CHEBI:60032"/>
        <dbReference type="ChEBI" id="CHEBI:60392"/>
        <dbReference type="ChEBI" id="CHEBI:70758"/>
        <dbReference type="EC" id="2.7.8.13"/>
    </reaction>
</comment>
<comment type="cofactor">
    <cofactor evidence="1">
        <name>Mg(2+)</name>
        <dbReference type="ChEBI" id="CHEBI:18420"/>
    </cofactor>
</comment>
<comment type="pathway">
    <text evidence="1">Cell wall biogenesis; peptidoglycan biosynthesis.</text>
</comment>
<comment type="subcellular location">
    <subcellularLocation>
        <location evidence="1">Cell membrane</location>
        <topology evidence="1">Multi-pass membrane protein</topology>
    </subcellularLocation>
</comment>
<comment type="similarity">
    <text evidence="1">Belongs to the glycosyltransferase 4 family. MraY subfamily.</text>
</comment>
<keyword id="KW-0131">Cell cycle</keyword>
<keyword id="KW-0132">Cell division</keyword>
<keyword id="KW-1003">Cell membrane</keyword>
<keyword id="KW-0133">Cell shape</keyword>
<keyword id="KW-0961">Cell wall biogenesis/degradation</keyword>
<keyword id="KW-0460">Magnesium</keyword>
<keyword id="KW-0472">Membrane</keyword>
<keyword id="KW-0479">Metal-binding</keyword>
<keyword id="KW-0573">Peptidoglycan synthesis</keyword>
<keyword id="KW-1185">Reference proteome</keyword>
<keyword id="KW-0808">Transferase</keyword>
<keyword id="KW-0812">Transmembrane</keyword>
<keyword id="KW-1133">Transmembrane helix</keyword>